<gene>
    <name evidence="1" type="primary">fni</name>
    <name type="ordered locus">BCAH820_1593</name>
</gene>
<feature type="chain" id="PRO_1000120537" description="Isopentenyl-diphosphate delta-isomerase">
    <location>
        <begin position="1"/>
        <end position="349"/>
    </location>
</feature>
<feature type="binding site" evidence="1">
    <location>
        <begin position="6"/>
        <end position="7"/>
    </location>
    <ligand>
        <name>substrate</name>
    </ligand>
</feature>
<feature type="binding site" evidence="1">
    <location>
        <begin position="62"/>
        <end position="64"/>
    </location>
    <ligand>
        <name>FMN</name>
        <dbReference type="ChEBI" id="CHEBI:58210"/>
    </ligand>
</feature>
<feature type="binding site" evidence="1">
    <location>
        <position position="93"/>
    </location>
    <ligand>
        <name>FMN</name>
        <dbReference type="ChEBI" id="CHEBI:58210"/>
    </ligand>
</feature>
<feature type="binding site" evidence="1">
    <location>
        <position position="122"/>
    </location>
    <ligand>
        <name>FMN</name>
        <dbReference type="ChEBI" id="CHEBI:58210"/>
    </ligand>
</feature>
<feature type="binding site" evidence="1">
    <location>
        <position position="152"/>
    </location>
    <ligand>
        <name>substrate</name>
    </ligand>
</feature>
<feature type="binding site" evidence="1">
    <location>
        <position position="153"/>
    </location>
    <ligand>
        <name>Mg(2+)</name>
        <dbReference type="ChEBI" id="CHEBI:18420"/>
    </ligand>
</feature>
<feature type="binding site" evidence="1">
    <location>
        <position position="184"/>
    </location>
    <ligand>
        <name>FMN</name>
        <dbReference type="ChEBI" id="CHEBI:58210"/>
    </ligand>
</feature>
<feature type="binding site" evidence="1">
    <location>
        <position position="214"/>
    </location>
    <ligand>
        <name>FMN</name>
        <dbReference type="ChEBI" id="CHEBI:58210"/>
    </ligand>
</feature>
<feature type="binding site" evidence="1">
    <location>
        <begin position="258"/>
        <end position="259"/>
    </location>
    <ligand>
        <name>FMN</name>
        <dbReference type="ChEBI" id="CHEBI:58210"/>
    </ligand>
</feature>
<feature type="binding site" evidence="1">
    <location>
        <begin position="280"/>
        <end position="281"/>
    </location>
    <ligand>
        <name>FMN</name>
        <dbReference type="ChEBI" id="CHEBI:58210"/>
    </ligand>
</feature>
<accession>B7JGY4</accession>
<reference key="1">
    <citation type="submission" date="2008-10" db="EMBL/GenBank/DDBJ databases">
        <title>Genome sequence of Bacillus cereus AH820.</title>
        <authorList>
            <person name="Dodson R.J."/>
            <person name="Durkin A.S."/>
            <person name="Rosovitz M.J."/>
            <person name="Rasko D.A."/>
            <person name="Hoffmaster A."/>
            <person name="Ravel J."/>
            <person name="Sutton G."/>
        </authorList>
    </citation>
    <scope>NUCLEOTIDE SEQUENCE [LARGE SCALE GENOMIC DNA]</scope>
    <source>
        <strain>AH820</strain>
    </source>
</reference>
<name>IDI2_BACC0</name>
<sequence length="349" mass="38185">MVRAKRKLDHIEYALSTGQSRTHGFHDIEFVHQSLPNSSYETITCETKIGELSLSSPIFINAMTGGGGEKTLHINEQLAYVAKHHNLAMAVGSQMAALKDESEAASYKIIRKVNPNGIFFANLGSEATVEQAERAVDMVGANALQIHLNVIQELTMPEGDRDFTGVLQRIEKIVLNSKVPVIVKEVGFGMSKETMQQLASVGVTAIDIGGQGGTNFAAVENERRQRMLSYFNNWGIQTATSIIEATSTNNNLSFIASGGIQTALDVAKAIALGANTTAFAGYFLRILMEDGIEKLVDEIDLLHTDLKFIMTALGAKTIEELQSVPLVIKGETYHWLTQRGIDTTHYSRR</sequence>
<proteinExistence type="inferred from homology"/>
<evidence type="ECO:0000255" key="1">
    <source>
        <dbReference type="HAMAP-Rule" id="MF_00354"/>
    </source>
</evidence>
<comment type="function">
    <text evidence="1">Involved in the biosynthesis of isoprenoids. Catalyzes the 1,3-allylic rearrangement of the homoallylic substrate isopentenyl (IPP) to its allylic isomer, dimethylallyl diphosphate (DMAPP).</text>
</comment>
<comment type="catalytic activity">
    <reaction evidence="1">
        <text>isopentenyl diphosphate = dimethylallyl diphosphate</text>
        <dbReference type="Rhea" id="RHEA:23284"/>
        <dbReference type="ChEBI" id="CHEBI:57623"/>
        <dbReference type="ChEBI" id="CHEBI:128769"/>
        <dbReference type="EC" id="5.3.3.2"/>
    </reaction>
</comment>
<comment type="cofactor">
    <cofactor evidence="1">
        <name>FMN</name>
        <dbReference type="ChEBI" id="CHEBI:58210"/>
    </cofactor>
</comment>
<comment type="cofactor">
    <cofactor evidence="1">
        <name>NADPH</name>
        <dbReference type="ChEBI" id="CHEBI:57783"/>
    </cofactor>
</comment>
<comment type="cofactor">
    <cofactor evidence="1">
        <name>Mg(2+)</name>
        <dbReference type="ChEBI" id="CHEBI:18420"/>
    </cofactor>
</comment>
<comment type="subunit">
    <text evidence="1">Homooctamer. Dimer of tetramers.</text>
</comment>
<comment type="subcellular location">
    <subcellularLocation>
        <location evidence="1">Cytoplasm</location>
    </subcellularLocation>
</comment>
<comment type="similarity">
    <text evidence="1">Belongs to the IPP isomerase type 2 family.</text>
</comment>
<keyword id="KW-0963">Cytoplasm</keyword>
<keyword id="KW-0285">Flavoprotein</keyword>
<keyword id="KW-0288">FMN</keyword>
<keyword id="KW-0413">Isomerase</keyword>
<keyword id="KW-0414">Isoprene biosynthesis</keyword>
<keyword id="KW-0460">Magnesium</keyword>
<keyword id="KW-0479">Metal-binding</keyword>
<keyword id="KW-0521">NADP</keyword>
<protein>
    <recommendedName>
        <fullName evidence="1">Isopentenyl-diphosphate delta-isomerase</fullName>
        <shortName evidence="1">IPP isomerase</shortName>
        <ecNumber evidence="1">5.3.3.2</ecNumber>
    </recommendedName>
    <alternativeName>
        <fullName evidence="1">Isopentenyl diphosphate:dimethylallyl diphosphate isomerase</fullName>
    </alternativeName>
    <alternativeName>
        <fullName evidence="1">Isopentenyl pyrophosphate isomerase</fullName>
    </alternativeName>
    <alternativeName>
        <fullName evidence="1">Type 2 isopentenyl diphosphate isomerase</fullName>
        <shortName evidence="1">IDI-2</shortName>
    </alternativeName>
</protein>
<dbReference type="EC" id="5.3.3.2" evidence="1"/>
<dbReference type="EMBL" id="CP001283">
    <property type="protein sequence ID" value="ACK87455.1"/>
    <property type="molecule type" value="Genomic_DNA"/>
</dbReference>
<dbReference type="RefSeq" id="WP_000251062.1">
    <property type="nucleotide sequence ID" value="NC_011773.1"/>
</dbReference>
<dbReference type="SMR" id="B7JGY4"/>
<dbReference type="KEGG" id="bcu:BCAH820_1593"/>
<dbReference type="HOGENOM" id="CLU_065515_0_0_9"/>
<dbReference type="Proteomes" id="UP000001363">
    <property type="component" value="Chromosome"/>
</dbReference>
<dbReference type="GO" id="GO:0005737">
    <property type="term" value="C:cytoplasm"/>
    <property type="evidence" value="ECO:0007669"/>
    <property type="project" value="UniProtKB-SubCell"/>
</dbReference>
<dbReference type="GO" id="GO:0010181">
    <property type="term" value="F:FMN binding"/>
    <property type="evidence" value="ECO:0007669"/>
    <property type="project" value="UniProtKB-UniRule"/>
</dbReference>
<dbReference type="GO" id="GO:0004452">
    <property type="term" value="F:isopentenyl-diphosphate delta-isomerase activity"/>
    <property type="evidence" value="ECO:0007669"/>
    <property type="project" value="UniProtKB-UniRule"/>
</dbReference>
<dbReference type="GO" id="GO:0000287">
    <property type="term" value="F:magnesium ion binding"/>
    <property type="evidence" value="ECO:0007669"/>
    <property type="project" value="UniProtKB-UniRule"/>
</dbReference>
<dbReference type="GO" id="GO:0070402">
    <property type="term" value="F:NADPH binding"/>
    <property type="evidence" value="ECO:0007669"/>
    <property type="project" value="UniProtKB-UniRule"/>
</dbReference>
<dbReference type="GO" id="GO:0016491">
    <property type="term" value="F:oxidoreductase activity"/>
    <property type="evidence" value="ECO:0007669"/>
    <property type="project" value="InterPro"/>
</dbReference>
<dbReference type="GO" id="GO:0008299">
    <property type="term" value="P:isoprenoid biosynthetic process"/>
    <property type="evidence" value="ECO:0007669"/>
    <property type="project" value="UniProtKB-UniRule"/>
</dbReference>
<dbReference type="CDD" id="cd02811">
    <property type="entry name" value="IDI-2_FMN"/>
    <property type="match status" value="1"/>
</dbReference>
<dbReference type="FunFam" id="3.20.20.70:FF:000115">
    <property type="entry name" value="Isopentenyl-diphosphate delta-isomerase"/>
    <property type="match status" value="1"/>
</dbReference>
<dbReference type="Gene3D" id="3.20.20.70">
    <property type="entry name" value="Aldolase class I"/>
    <property type="match status" value="1"/>
</dbReference>
<dbReference type="HAMAP" id="MF_00354">
    <property type="entry name" value="Idi_2"/>
    <property type="match status" value="1"/>
</dbReference>
<dbReference type="InterPro" id="IPR013785">
    <property type="entry name" value="Aldolase_TIM"/>
</dbReference>
<dbReference type="InterPro" id="IPR000262">
    <property type="entry name" value="FMN-dep_DH"/>
</dbReference>
<dbReference type="InterPro" id="IPR011179">
    <property type="entry name" value="IPdP_isomerase"/>
</dbReference>
<dbReference type="NCBIfam" id="TIGR02151">
    <property type="entry name" value="IPP_isom_2"/>
    <property type="match status" value="1"/>
</dbReference>
<dbReference type="PANTHER" id="PTHR43665">
    <property type="entry name" value="ISOPENTENYL-DIPHOSPHATE DELTA-ISOMERASE"/>
    <property type="match status" value="1"/>
</dbReference>
<dbReference type="PANTHER" id="PTHR43665:SF1">
    <property type="entry name" value="ISOPENTENYL-DIPHOSPHATE DELTA-ISOMERASE"/>
    <property type="match status" value="1"/>
</dbReference>
<dbReference type="Pfam" id="PF01070">
    <property type="entry name" value="FMN_dh"/>
    <property type="match status" value="1"/>
</dbReference>
<dbReference type="PIRSF" id="PIRSF003314">
    <property type="entry name" value="IPP_isomerase"/>
    <property type="match status" value="1"/>
</dbReference>
<dbReference type="SMART" id="SM01240">
    <property type="entry name" value="IMPDH"/>
    <property type="match status" value="1"/>
</dbReference>
<dbReference type="SUPFAM" id="SSF51395">
    <property type="entry name" value="FMN-linked oxidoreductases"/>
    <property type="match status" value="1"/>
</dbReference>
<organism>
    <name type="scientific">Bacillus cereus (strain AH820)</name>
    <dbReference type="NCBI Taxonomy" id="405535"/>
    <lineage>
        <taxon>Bacteria</taxon>
        <taxon>Bacillati</taxon>
        <taxon>Bacillota</taxon>
        <taxon>Bacilli</taxon>
        <taxon>Bacillales</taxon>
        <taxon>Bacillaceae</taxon>
        <taxon>Bacillus</taxon>
        <taxon>Bacillus cereus group</taxon>
    </lineage>
</organism>